<keyword id="KW-0963">Cytoplasm</keyword>
<keyword id="KW-0251">Elongation factor</keyword>
<keyword id="KW-0342">GTP-binding</keyword>
<keyword id="KW-0547">Nucleotide-binding</keyword>
<keyword id="KW-0648">Protein biosynthesis</keyword>
<keyword id="KW-1185">Reference proteome</keyword>
<sequence length="699" mass="77032">MARKTPIERYRNIGICAHVDAGKTTTTERVLFYTGLSHKIGEVHDGAATMDWMEQEQERGITITSAATTCFWAGMQQQFDQHRVNIIDTPGHVDFTIEVERSLRVLDGAVVVLCGSSGVQPQTETVWRQANKYEVPRMVFVNKMDRAGANFERVVKQLKDRLGATPVPLQMTIGAEDEFKGVVDLVKMKSIIWNEADQGMTFEYQEIPADLQEKCAKLREQLVEAAAEANDDYMNKYLEEGELTEEEIKAGIRARTLANEIVPVLGGSAFKNKGVQAVLDAVIEYLPSPTEVKAIEGILDDGETVAVRKSDDNEPFSALAFKIATDPFVGTLTFIRVYSGVLESGTGVYNPVKSKKERIGRMVQMHSNNREEIKEVRAGDIAAMIGLKDVTTGDTLCDPNNIITLERMEFPDPVISVAVEPKSKADQEKMGIALGKLAQEDPSFRVKTDEETGQTIISGMGELHLDIIVDRMRREFKVEANIGKPQVAYREAIRNTCEIEGKFVRQSGGRGQYGHVWIKFEPRAEGEGLEFVNEIVGGVVPKEYVPAIQKGIEEQMQNGILAGYPLLALKATVFDGSYHDVDSNEMAFKIAASMATKQLAGKGGAVLLEPIMKVEVVTPEENMGDVVGDLNRRRGLIQGMDESVSGKVVNAEVPLAEMFGYATDLRSATQGRATYTMEFAQYAEAPNNVAEAIISARSK</sequence>
<evidence type="ECO:0000255" key="1">
    <source>
        <dbReference type="HAMAP-Rule" id="MF_00054"/>
    </source>
</evidence>
<gene>
    <name evidence="1" type="primary">fusA1</name>
    <name type="ordered locus">HCH_06220</name>
</gene>
<accession>Q2S909</accession>
<reference key="1">
    <citation type="journal article" date="2005" name="Nucleic Acids Res.">
        <title>Genomic blueprint of Hahella chejuensis, a marine microbe producing an algicidal agent.</title>
        <authorList>
            <person name="Jeong H."/>
            <person name="Yim J.H."/>
            <person name="Lee C."/>
            <person name="Choi S.-H."/>
            <person name="Park Y.K."/>
            <person name="Yoon S.H."/>
            <person name="Hur C.-G."/>
            <person name="Kang H.-Y."/>
            <person name="Kim D."/>
            <person name="Lee H.H."/>
            <person name="Park K.H."/>
            <person name="Park S.-H."/>
            <person name="Park H.-S."/>
            <person name="Lee H.K."/>
            <person name="Oh T.K."/>
            <person name="Kim J.F."/>
        </authorList>
    </citation>
    <scope>NUCLEOTIDE SEQUENCE [LARGE SCALE GENOMIC DNA]</scope>
    <source>
        <strain>KCTC 2396</strain>
    </source>
</reference>
<organism>
    <name type="scientific">Hahella chejuensis (strain KCTC 2396)</name>
    <dbReference type="NCBI Taxonomy" id="349521"/>
    <lineage>
        <taxon>Bacteria</taxon>
        <taxon>Pseudomonadati</taxon>
        <taxon>Pseudomonadota</taxon>
        <taxon>Gammaproteobacteria</taxon>
        <taxon>Oceanospirillales</taxon>
        <taxon>Hahellaceae</taxon>
        <taxon>Hahella</taxon>
    </lineage>
</organism>
<proteinExistence type="inferred from homology"/>
<dbReference type="EMBL" id="CP000155">
    <property type="protein sequence ID" value="ABC32865.1"/>
    <property type="molecule type" value="Genomic_DNA"/>
</dbReference>
<dbReference type="RefSeq" id="WP_011399923.1">
    <property type="nucleotide sequence ID" value="NC_007645.1"/>
</dbReference>
<dbReference type="SMR" id="Q2S909"/>
<dbReference type="STRING" id="349521.HCH_06220"/>
<dbReference type="KEGG" id="hch:HCH_06220"/>
<dbReference type="eggNOG" id="COG0480">
    <property type="taxonomic scope" value="Bacteria"/>
</dbReference>
<dbReference type="HOGENOM" id="CLU_002794_4_1_6"/>
<dbReference type="OrthoDB" id="9804431at2"/>
<dbReference type="Proteomes" id="UP000000238">
    <property type="component" value="Chromosome"/>
</dbReference>
<dbReference type="GO" id="GO:0005737">
    <property type="term" value="C:cytoplasm"/>
    <property type="evidence" value="ECO:0007669"/>
    <property type="project" value="UniProtKB-SubCell"/>
</dbReference>
<dbReference type="GO" id="GO:0005525">
    <property type="term" value="F:GTP binding"/>
    <property type="evidence" value="ECO:0007669"/>
    <property type="project" value="UniProtKB-UniRule"/>
</dbReference>
<dbReference type="GO" id="GO:0003924">
    <property type="term" value="F:GTPase activity"/>
    <property type="evidence" value="ECO:0007669"/>
    <property type="project" value="InterPro"/>
</dbReference>
<dbReference type="GO" id="GO:0097216">
    <property type="term" value="F:guanosine tetraphosphate binding"/>
    <property type="evidence" value="ECO:0007669"/>
    <property type="project" value="UniProtKB-ARBA"/>
</dbReference>
<dbReference type="GO" id="GO:0003746">
    <property type="term" value="F:translation elongation factor activity"/>
    <property type="evidence" value="ECO:0007669"/>
    <property type="project" value="UniProtKB-UniRule"/>
</dbReference>
<dbReference type="GO" id="GO:0032790">
    <property type="term" value="P:ribosome disassembly"/>
    <property type="evidence" value="ECO:0007669"/>
    <property type="project" value="TreeGrafter"/>
</dbReference>
<dbReference type="CDD" id="cd01886">
    <property type="entry name" value="EF-G"/>
    <property type="match status" value="1"/>
</dbReference>
<dbReference type="CDD" id="cd16262">
    <property type="entry name" value="EFG_III"/>
    <property type="match status" value="1"/>
</dbReference>
<dbReference type="CDD" id="cd01434">
    <property type="entry name" value="EFG_mtEFG1_IV"/>
    <property type="match status" value="1"/>
</dbReference>
<dbReference type="CDD" id="cd03713">
    <property type="entry name" value="EFG_mtEFG_C"/>
    <property type="match status" value="1"/>
</dbReference>
<dbReference type="CDD" id="cd04088">
    <property type="entry name" value="EFG_mtEFG_II"/>
    <property type="match status" value="1"/>
</dbReference>
<dbReference type="FunFam" id="2.40.30.10:FF:000006">
    <property type="entry name" value="Elongation factor G"/>
    <property type="match status" value="1"/>
</dbReference>
<dbReference type="FunFam" id="3.30.230.10:FF:000003">
    <property type="entry name" value="Elongation factor G"/>
    <property type="match status" value="1"/>
</dbReference>
<dbReference type="FunFam" id="3.30.70.240:FF:000001">
    <property type="entry name" value="Elongation factor G"/>
    <property type="match status" value="1"/>
</dbReference>
<dbReference type="FunFam" id="3.30.70.870:FF:000001">
    <property type="entry name" value="Elongation factor G"/>
    <property type="match status" value="1"/>
</dbReference>
<dbReference type="FunFam" id="3.40.50.300:FF:000029">
    <property type="entry name" value="Elongation factor G"/>
    <property type="match status" value="1"/>
</dbReference>
<dbReference type="Gene3D" id="3.30.230.10">
    <property type="match status" value="1"/>
</dbReference>
<dbReference type="Gene3D" id="3.30.70.240">
    <property type="match status" value="1"/>
</dbReference>
<dbReference type="Gene3D" id="3.30.70.870">
    <property type="entry name" value="Elongation Factor G (Translational Gtpase), domain 3"/>
    <property type="match status" value="1"/>
</dbReference>
<dbReference type="Gene3D" id="3.40.50.300">
    <property type="entry name" value="P-loop containing nucleotide triphosphate hydrolases"/>
    <property type="match status" value="1"/>
</dbReference>
<dbReference type="Gene3D" id="2.40.30.10">
    <property type="entry name" value="Translation factors"/>
    <property type="match status" value="1"/>
</dbReference>
<dbReference type="HAMAP" id="MF_00054_B">
    <property type="entry name" value="EF_G_EF_2_B"/>
    <property type="match status" value="1"/>
</dbReference>
<dbReference type="InterPro" id="IPR041095">
    <property type="entry name" value="EFG_II"/>
</dbReference>
<dbReference type="InterPro" id="IPR009022">
    <property type="entry name" value="EFG_III"/>
</dbReference>
<dbReference type="InterPro" id="IPR035647">
    <property type="entry name" value="EFG_III/V"/>
</dbReference>
<dbReference type="InterPro" id="IPR047872">
    <property type="entry name" value="EFG_IV"/>
</dbReference>
<dbReference type="InterPro" id="IPR035649">
    <property type="entry name" value="EFG_V"/>
</dbReference>
<dbReference type="InterPro" id="IPR000640">
    <property type="entry name" value="EFG_V-like"/>
</dbReference>
<dbReference type="InterPro" id="IPR004161">
    <property type="entry name" value="EFTu-like_2"/>
</dbReference>
<dbReference type="InterPro" id="IPR031157">
    <property type="entry name" value="G_TR_CS"/>
</dbReference>
<dbReference type="InterPro" id="IPR027417">
    <property type="entry name" value="P-loop_NTPase"/>
</dbReference>
<dbReference type="InterPro" id="IPR020568">
    <property type="entry name" value="Ribosomal_Su5_D2-typ_SF"/>
</dbReference>
<dbReference type="InterPro" id="IPR014721">
    <property type="entry name" value="Ribsml_uS5_D2-typ_fold_subgr"/>
</dbReference>
<dbReference type="InterPro" id="IPR005225">
    <property type="entry name" value="Small_GTP-bd"/>
</dbReference>
<dbReference type="InterPro" id="IPR000795">
    <property type="entry name" value="T_Tr_GTP-bd_dom"/>
</dbReference>
<dbReference type="InterPro" id="IPR009000">
    <property type="entry name" value="Transl_B-barrel_sf"/>
</dbReference>
<dbReference type="InterPro" id="IPR004540">
    <property type="entry name" value="Transl_elong_EFG/EF2"/>
</dbReference>
<dbReference type="InterPro" id="IPR005517">
    <property type="entry name" value="Transl_elong_EFG/EF2_IV"/>
</dbReference>
<dbReference type="NCBIfam" id="TIGR00484">
    <property type="entry name" value="EF-G"/>
    <property type="match status" value="1"/>
</dbReference>
<dbReference type="NCBIfam" id="NF009381">
    <property type="entry name" value="PRK12740.1-5"/>
    <property type="match status" value="1"/>
</dbReference>
<dbReference type="NCBIfam" id="TIGR00231">
    <property type="entry name" value="small_GTP"/>
    <property type="match status" value="1"/>
</dbReference>
<dbReference type="PANTHER" id="PTHR43261:SF1">
    <property type="entry name" value="RIBOSOME-RELEASING FACTOR 2, MITOCHONDRIAL"/>
    <property type="match status" value="1"/>
</dbReference>
<dbReference type="PANTHER" id="PTHR43261">
    <property type="entry name" value="TRANSLATION ELONGATION FACTOR G-RELATED"/>
    <property type="match status" value="1"/>
</dbReference>
<dbReference type="Pfam" id="PF00679">
    <property type="entry name" value="EFG_C"/>
    <property type="match status" value="1"/>
</dbReference>
<dbReference type="Pfam" id="PF14492">
    <property type="entry name" value="EFG_III"/>
    <property type="match status" value="1"/>
</dbReference>
<dbReference type="Pfam" id="PF03764">
    <property type="entry name" value="EFG_IV"/>
    <property type="match status" value="1"/>
</dbReference>
<dbReference type="Pfam" id="PF00009">
    <property type="entry name" value="GTP_EFTU"/>
    <property type="match status" value="1"/>
</dbReference>
<dbReference type="Pfam" id="PF03144">
    <property type="entry name" value="GTP_EFTU_D2"/>
    <property type="match status" value="1"/>
</dbReference>
<dbReference type="PRINTS" id="PR00315">
    <property type="entry name" value="ELONGATNFCT"/>
</dbReference>
<dbReference type="SMART" id="SM00838">
    <property type="entry name" value="EFG_C"/>
    <property type="match status" value="1"/>
</dbReference>
<dbReference type="SMART" id="SM00889">
    <property type="entry name" value="EFG_IV"/>
    <property type="match status" value="1"/>
</dbReference>
<dbReference type="SUPFAM" id="SSF54980">
    <property type="entry name" value="EF-G C-terminal domain-like"/>
    <property type="match status" value="2"/>
</dbReference>
<dbReference type="SUPFAM" id="SSF52540">
    <property type="entry name" value="P-loop containing nucleoside triphosphate hydrolases"/>
    <property type="match status" value="1"/>
</dbReference>
<dbReference type="SUPFAM" id="SSF54211">
    <property type="entry name" value="Ribosomal protein S5 domain 2-like"/>
    <property type="match status" value="1"/>
</dbReference>
<dbReference type="SUPFAM" id="SSF50447">
    <property type="entry name" value="Translation proteins"/>
    <property type="match status" value="1"/>
</dbReference>
<dbReference type="PROSITE" id="PS00301">
    <property type="entry name" value="G_TR_1"/>
    <property type="match status" value="1"/>
</dbReference>
<dbReference type="PROSITE" id="PS51722">
    <property type="entry name" value="G_TR_2"/>
    <property type="match status" value="1"/>
</dbReference>
<comment type="function">
    <text evidence="1">Catalyzes the GTP-dependent ribosomal translocation step during translation elongation. During this step, the ribosome changes from the pre-translocational (PRE) to the post-translocational (POST) state as the newly formed A-site-bound peptidyl-tRNA and P-site-bound deacylated tRNA move to the P and E sites, respectively. Catalyzes the coordinated movement of the two tRNA molecules, the mRNA and conformational changes in the ribosome.</text>
</comment>
<comment type="subcellular location">
    <subcellularLocation>
        <location evidence="1">Cytoplasm</location>
    </subcellularLocation>
</comment>
<comment type="similarity">
    <text evidence="1">Belongs to the TRAFAC class translation factor GTPase superfamily. Classic translation factor GTPase family. EF-G/EF-2 subfamily.</text>
</comment>
<feature type="chain" id="PRO_0000263458" description="Elongation factor G 1">
    <location>
        <begin position="1"/>
        <end position="699"/>
    </location>
</feature>
<feature type="domain" description="tr-type G">
    <location>
        <begin position="8"/>
        <end position="290"/>
    </location>
</feature>
<feature type="binding site" evidence="1">
    <location>
        <begin position="17"/>
        <end position="24"/>
    </location>
    <ligand>
        <name>GTP</name>
        <dbReference type="ChEBI" id="CHEBI:37565"/>
    </ligand>
</feature>
<feature type="binding site" evidence="1">
    <location>
        <begin position="88"/>
        <end position="92"/>
    </location>
    <ligand>
        <name>GTP</name>
        <dbReference type="ChEBI" id="CHEBI:37565"/>
    </ligand>
</feature>
<feature type="binding site" evidence="1">
    <location>
        <begin position="142"/>
        <end position="145"/>
    </location>
    <ligand>
        <name>GTP</name>
        <dbReference type="ChEBI" id="CHEBI:37565"/>
    </ligand>
</feature>
<protein>
    <recommendedName>
        <fullName evidence="1">Elongation factor G 1</fullName>
        <shortName evidence="1">EF-G 1</shortName>
    </recommendedName>
</protein>
<name>EFG1_HAHCH</name>